<accession>Q3M7G3</accession>
<protein>
    <recommendedName>
        <fullName evidence="1">Light-independent protochlorophyllide reductase subunit B</fullName>
        <shortName evidence="1">DPOR subunit B</shortName>
        <shortName evidence="1">LI-POR subunit B</shortName>
        <ecNumber evidence="1">1.3.7.7</ecNumber>
    </recommendedName>
</protein>
<organism>
    <name type="scientific">Trichormus variabilis (strain ATCC 29413 / PCC 7937)</name>
    <name type="common">Anabaena variabilis</name>
    <dbReference type="NCBI Taxonomy" id="240292"/>
    <lineage>
        <taxon>Bacteria</taxon>
        <taxon>Bacillati</taxon>
        <taxon>Cyanobacteriota</taxon>
        <taxon>Cyanophyceae</taxon>
        <taxon>Nostocales</taxon>
        <taxon>Nostocaceae</taxon>
        <taxon>Trichormus</taxon>
    </lineage>
</organism>
<reference key="1">
    <citation type="journal article" date="2014" name="Stand. Genomic Sci.">
        <title>Complete genome sequence of Anabaena variabilis ATCC 29413.</title>
        <authorList>
            <person name="Thiel T."/>
            <person name="Pratte B.S."/>
            <person name="Zhong J."/>
            <person name="Goodwin L."/>
            <person name="Copeland A."/>
            <person name="Lucas S."/>
            <person name="Han C."/>
            <person name="Pitluck S."/>
            <person name="Land M.L."/>
            <person name="Kyrpides N.C."/>
            <person name="Woyke T."/>
        </authorList>
    </citation>
    <scope>NUCLEOTIDE SEQUENCE [LARGE SCALE GENOMIC DNA]</scope>
    <source>
        <strain>ATCC 29413 / PCC 7937</strain>
    </source>
</reference>
<gene>
    <name evidence="1" type="primary">chlB</name>
    <name type="ordered locus">Ava_3466</name>
</gene>
<sequence>MKLAYWMYAGPAHIGTLRVATSFKNVHAIMHAPLGDDYFNVMRSMLSRERDFTPVTTSVVDRHVLARGSQEKVVENITRKDAEEHPDLIVLTPTCTSSILQEDLENFVERAQLDAKGDVLLADVNHYRVNELQAGDRTLHQIVQYYIEKARKKGELPEGKTAKPSVNIIGISTLGFHNNHDCTELKRLMADLGIEVNAVIPEGASVHELKNLPRAWFNLVPYRELGLMTASYLEKEFGTPCIDIVPMGVVETARCIRKIQEVINAQGADVNYEEYINEQTLYVSQAAWFSRSIDCQNLTGKKAVVFGDNTHAAALTKILSREMGIHVVWAGTYCKYDADWFREQVSEYCDEVLITEDHGEIGDAIARVEPSAIFGTQMERHVGKRLDIPCGVIAAPIHVQNFPIGYKPFLGYEGTNQITDLIYNSFTLGMEDHLLEIFGGHDTKEVITKGISAESDLSWTKDGLAELNKIPGFVRGKVKRNTEKFARDRGFKDISAEVLYAAKEAVGA</sequence>
<feature type="chain" id="PRO_1000048399" description="Light-independent protochlorophyllide reductase subunit B">
    <location>
        <begin position="1"/>
        <end position="508"/>
    </location>
</feature>
<feature type="active site" description="Proton donor" evidence="1">
    <location>
        <position position="294"/>
    </location>
</feature>
<feature type="binding site" evidence="1">
    <location>
        <position position="36"/>
    </location>
    <ligand>
        <name>[4Fe-4S] cluster</name>
        <dbReference type="ChEBI" id="CHEBI:49883"/>
        <note>ligand shared with heterodimeric partner</note>
    </ligand>
</feature>
<feature type="binding site" evidence="1">
    <location>
        <begin position="429"/>
        <end position="430"/>
    </location>
    <ligand>
        <name>substrate</name>
    </ligand>
</feature>
<name>CHLB_TRIV2</name>
<keyword id="KW-0004">4Fe-4S</keyword>
<keyword id="KW-0067">ATP-binding</keyword>
<keyword id="KW-0149">Chlorophyll biosynthesis</keyword>
<keyword id="KW-0408">Iron</keyword>
<keyword id="KW-0411">Iron-sulfur</keyword>
<keyword id="KW-0479">Metal-binding</keyword>
<keyword id="KW-0547">Nucleotide-binding</keyword>
<keyword id="KW-0560">Oxidoreductase</keyword>
<keyword id="KW-0602">Photosynthesis</keyword>
<proteinExistence type="inferred from homology"/>
<comment type="function">
    <text evidence="1">Component of the dark-operative protochlorophyllide reductase (DPOR) that uses Mg-ATP and reduced ferredoxin to reduce ring D of protochlorophyllide (Pchlide) to form chlorophyllide a (Chlide). This reaction is light-independent. The NB-protein (ChlN-ChlB) is the catalytic component of the complex.</text>
</comment>
<comment type="catalytic activity">
    <reaction evidence="1">
        <text>chlorophyllide a + oxidized 2[4Fe-4S]-[ferredoxin] + 2 ADP + 2 phosphate = protochlorophyllide a + reduced 2[4Fe-4S]-[ferredoxin] + 2 ATP + 2 H2O</text>
        <dbReference type="Rhea" id="RHEA:28202"/>
        <dbReference type="Rhea" id="RHEA-COMP:10002"/>
        <dbReference type="Rhea" id="RHEA-COMP:10004"/>
        <dbReference type="ChEBI" id="CHEBI:15377"/>
        <dbReference type="ChEBI" id="CHEBI:30616"/>
        <dbReference type="ChEBI" id="CHEBI:33722"/>
        <dbReference type="ChEBI" id="CHEBI:33723"/>
        <dbReference type="ChEBI" id="CHEBI:43474"/>
        <dbReference type="ChEBI" id="CHEBI:83348"/>
        <dbReference type="ChEBI" id="CHEBI:83350"/>
        <dbReference type="ChEBI" id="CHEBI:456216"/>
        <dbReference type="EC" id="1.3.7.7"/>
    </reaction>
</comment>
<comment type="cofactor">
    <cofactor evidence="1">
        <name>[4Fe-4S] cluster</name>
        <dbReference type="ChEBI" id="CHEBI:49883"/>
    </cofactor>
    <text evidence="1">Binds 1 [4Fe-4S] cluster per heterodimer. The cluster is bound at the heterodimer interface by residues from both subunits.</text>
</comment>
<comment type="pathway">
    <text evidence="1">Porphyrin-containing compound metabolism; chlorophyll biosynthesis (light-independent).</text>
</comment>
<comment type="subunit">
    <text evidence="1">Protochlorophyllide reductase is composed of three subunits; ChlL, ChlN and ChlB. Forms a heterotetramer of two ChlB and two ChlN subunits.</text>
</comment>
<comment type="similarity">
    <text evidence="1">Belongs to the ChlB/BchB/BchZ family.</text>
</comment>
<dbReference type="EC" id="1.3.7.7" evidence="1"/>
<dbReference type="EMBL" id="CP000117">
    <property type="protein sequence ID" value="ABA23073.1"/>
    <property type="molecule type" value="Genomic_DNA"/>
</dbReference>
<dbReference type="SMR" id="Q3M7G3"/>
<dbReference type="STRING" id="240292.Ava_3466"/>
<dbReference type="KEGG" id="ava:Ava_3466"/>
<dbReference type="eggNOG" id="COG2710">
    <property type="taxonomic scope" value="Bacteria"/>
</dbReference>
<dbReference type="HOGENOM" id="CLU_025470_0_0_3"/>
<dbReference type="UniPathway" id="UPA00670"/>
<dbReference type="Proteomes" id="UP000002533">
    <property type="component" value="Chromosome"/>
</dbReference>
<dbReference type="GO" id="GO:0051539">
    <property type="term" value="F:4 iron, 4 sulfur cluster binding"/>
    <property type="evidence" value="ECO:0007669"/>
    <property type="project" value="UniProtKB-UniRule"/>
</dbReference>
<dbReference type="GO" id="GO:0005524">
    <property type="term" value="F:ATP binding"/>
    <property type="evidence" value="ECO:0007669"/>
    <property type="project" value="UniProtKB-UniRule"/>
</dbReference>
<dbReference type="GO" id="GO:0046872">
    <property type="term" value="F:metal ion binding"/>
    <property type="evidence" value="ECO:0007669"/>
    <property type="project" value="UniProtKB-KW"/>
</dbReference>
<dbReference type="GO" id="GO:0016730">
    <property type="term" value="F:oxidoreductase activity, acting on iron-sulfur proteins as donors"/>
    <property type="evidence" value="ECO:0007669"/>
    <property type="project" value="InterPro"/>
</dbReference>
<dbReference type="GO" id="GO:0016636">
    <property type="term" value="F:oxidoreductase activity, acting on the CH-CH group of donors, iron-sulfur protein as acceptor"/>
    <property type="evidence" value="ECO:0007669"/>
    <property type="project" value="UniProtKB-UniRule"/>
</dbReference>
<dbReference type="GO" id="GO:0036068">
    <property type="term" value="P:light-independent chlorophyll biosynthetic process"/>
    <property type="evidence" value="ECO:0007669"/>
    <property type="project" value="UniProtKB-UniRule"/>
</dbReference>
<dbReference type="GO" id="GO:0019685">
    <property type="term" value="P:photosynthesis, dark reaction"/>
    <property type="evidence" value="ECO:0007669"/>
    <property type="project" value="InterPro"/>
</dbReference>
<dbReference type="CDD" id="cd01981">
    <property type="entry name" value="Pchlide_reductase_B"/>
    <property type="match status" value="1"/>
</dbReference>
<dbReference type="Gene3D" id="1.20.89.20">
    <property type="match status" value="1"/>
</dbReference>
<dbReference type="Gene3D" id="3.40.50.1980">
    <property type="entry name" value="Nitrogenase molybdenum iron protein domain"/>
    <property type="match status" value="3"/>
</dbReference>
<dbReference type="Gene3D" id="1.10.8.550">
    <property type="entry name" value="Proto-chlorophyllide reductase 57 kD subunit B"/>
    <property type="match status" value="1"/>
</dbReference>
<dbReference type="HAMAP" id="MF_00353">
    <property type="entry name" value="ChlB_BchB"/>
    <property type="match status" value="1"/>
</dbReference>
<dbReference type="InterPro" id="IPR050152">
    <property type="entry name" value="ChlB/BchB/BchZ"/>
</dbReference>
<dbReference type="InterPro" id="IPR013580">
    <property type="entry name" value="LI-POR_suB-like_C"/>
</dbReference>
<dbReference type="InterPro" id="IPR000510">
    <property type="entry name" value="Nase/OxRdtase_comp1"/>
</dbReference>
<dbReference type="InterPro" id="IPR042298">
    <property type="entry name" value="P-CP_red_C"/>
</dbReference>
<dbReference type="InterPro" id="IPR005969">
    <property type="entry name" value="Protochl_reductB"/>
</dbReference>
<dbReference type="InterPro" id="IPR016209">
    <property type="entry name" value="Protochlorophyllide_Rdtase"/>
</dbReference>
<dbReference type="NCBIfam" id="TIGR01278">
    <property type="entry name" value="DPOR_BchB"/>
    <property type="match status" value="1"/>
</dbReference>
<dbReference type="PANTHER" id="PTHR33712">
    <property type="entry name" value="LIGHT-INDEPENDENT PROTOCHLOROPHYLLIDE REDUCTASE SUBUNIT B"/>
    <property type="match status" value="1"/>
</dbReference>
<dbReference type="PANTHER" id="PTHR33712:SF7">
    <property type="entry name" value="LIGHT-INDEPENDENT PROTOCHLOROPHYLLIDE REDUCTASE SUBUNIT B"/>
    <property type="match status" value="1"/>
</dbReference>
<dbReference type="Pfam" id="PF00148">
    <property type="entry name" value="Oxidored_nitro"/>
    <property type="match status" value="1"/>
</dbReference>
<dbReference type="Pfam" id="PF08369">
    <property type="entry name" value="PCP_red"/>
    <property type="match status" value="1"/>
</dbReference>
<dbReference type="PIRSF" id="PIRSF000163">
    <property type="entry name" value="PCP_ChlB"/>
    <property type="match status" value="1"/>
</dbReference>
<dbReference type="SUPFAM" id="SSF53807">
    <property type="entry name" value="Helical backbone' metal receptor"/>
    <property type="match status" value="1"/>
</dbReference>
<evidence type="ECO:0000255" key="1">
    <source>
        <dbReference type="HAMAP-Rule" id="MF_00353"/>
    </source>
</evidence>